<keyword id="KW-0238">DNA-binding</keyword>
<keyword id="KW-1185">Reference proteome</keyword>
<keyword id="KW-0804">Transcription</keyword>
<keyword id="KW-0805">Transcription regulation</keyword>
<protein>
    <recommendedName>
        <fullName evidence="1">Putative HTH-type transcriptional regulatory protein HQ_3058A</fullName>
    </recommendedName>
</protein>
<evidence type="ECO:0000255" key="1">
    <source>
        <dbReference type="HAMAP-Rule" id="MF_00584"/>
    </source>
</evidence>
<evidence type="ECO:0000256" key="2">
    <source>
        <dbReference type="SAM" id="MobiDB-lite"/>
    </source>
</evidence>
<proteinExistence type="inferred from homology"/>
<dbReference type="EMBL" id="AM180088">
    <property type="protein sequence ID" value="CAJ53159.1"/>
    <property type="molecule type" value="Genomic_DNA"/>
</dbReference>
<dbReference type="RefSeq" id="WP_011572266.1">
    <property type="nucleotide sequence ID" value="NC_008212.1"/>
</dbReference>
<dbReference type="SMR" id="Q18FU6"/>
<dbReference type="STRING" id="362976.HQ_3058A"/>
<dbReference type="GeneID" id="4193263"/>
<dbReference type="KEGG" id="hwa:HQ_3058A"/>
<dbReference type="eggNOG" id="arCOG04152">
    <property type="taxonomic scope" value="Archaea"/>
</dbReference>
<dbReference type="HOGENOM" id="CLU_075726_0_0_2"/>
<dbReference type="Proteomes" id="UP000001975">
    <property type="component" value="Chromosome"/>
</dbReference>
<dbReference type="GO" id="GO:0003677">
    <property type="term" value="F:DNA binding"/>
    <property type="evidence" value="ECO:0007669"/>
    <property type="project" value="UniProtKB-KW"/>
</dbReference>
<dbReference type="GO" id="GO:0003700">
    <property type="term" value="F:DNA-binding transcription factor activity"/>
    <property type="evidence" value="ECO:0007669"/>
    <property type="project" value="UniProtKB-UniRule"/>
</dbReference>
<dbReference type="CDD" id="cd00093">
    <property type="entry name" value="HTH_XRE"/>
    <property type="match status" value="1"/>
</dbReference>
<dbReference type="Gene3D" id="1.10.260.40">
    <property type="entry name" value="lambda repressor-like DNA-binding domains"/>
    <property type="match status" value="1"/>
</dbReference>
<dbReference type="HAMAP" id="MF_00584">
    <property type="entry name" value="HTH_type_cro_C1"/>
    <property type="match status" value="1"/>
</dbReference>
<dbReference type="InterPro" id="IPR020886">
    <property type="entry name" value="Arc_TR_HTH"/>
</dbReference>
<dbReference type="InterPro" id="IPR001387">
    <property type="entry name" value="Cro/C1-type_HTH"/>
</dbReference>
<dbReference type="InterPro" id="IPR010982">
    <property type="entry name" value="Lambda_DNA-bd_dom_sf"/>
</dbReference>
<dbReference type="NCBIfam" id="NF003162">
    <property type="entry name" value="PRK04140.1"/>
    <property type="match status" value="1"/>
</dbReference>
<dbReference type="Pfam" id="PF01381">
    <property type="entry name" value="HTH_3"/>
    <property type="match status" value="1"/>
</dbReference>
<dbReference type="SMART" id="SM00530">
    <property type="entry name" value="HTH_XRE"/>
    <property type="match status" value="1"/>
</dbReference>
<dbReference type="SUPFAM" id="SSF47413">
    <property type="entry name" value="lambda repressor-like DNA-binding domains"/>
    <property type="match status" value="1"/>
</dbReference>
<dbReference type="PROSITE" id="PS50943">
    <property type="entry name" value="HTH_CROC1"/>
    <property type="match status" value="1"/>
</dbReference>
<reference key="1">
    <citation type="journal article" date="2006" name="BMC Genomics">
        <title>The genome of the square archaeon Haloquadratum walsbyi: life at the limits of water activity.</title>
        <authorList>
            <person name="Bolhuis H."/>
            <person name="Palm P."/>
            <person name="Wende A."/>
            <person name="Falb M."/>
            <person name="Rampp M."/>
            <person name="Rodriguez-Valera F."/>
            <person name="Pfeiffer F."/>
            <person name="Oesterhelt D."/>
        </authorList>
    </citation>
    <scope>NUCLEOTIDE SEQUENCE [LARGE SCALE GENOMIC DNA]</scope>
    <source>
        <strain>DSM 16790 / HBSQ001</strain>
    </source>
</reference>
<name>Y3058_HALWD</name>
<organism>
    <name type="scientific">Haloquadratum walsbyi (strain DSM 16790 / HBSQ001)</name>
    <dbReference type="NCBI Taxonomy" id="362976"/>
    <lineage>
        <taxon>Archaea</taxon>
        <taxon>Methanobacteriati</taxon>
        <taxon>Methanobacteriota</taxon>
        <taxon>Stenosarchaea group</taxon>
        <taxon>Halobacteria</taxon>
        <taxon>Halobacteriales</taxon>
        <taxon>Haloferacaceae</taxon>
        <taxon>Haloquadratum</taxon>
    </lineage>
</organism>
<feature type="chain" id="PRO_0000259356" description="Putative HTH-type transcriptional regulatory protein HQ_3058A">
    <location>
        <begin position="1"/>
        <end position="325"/>
    </location>
</feature>
<feature type="domain" description="HTH cro/C1-type" evidence="1">
    <location>
        <begin position="132"/>
        <end position="186"/>
    </location>
</feature>
<feature type="DNA-binding region" description="H-T-H motif" evidence="1">
    <location>
        <begin position="143"/>
        <end position="162"/>
    </location>
</feature>
<feature type="region of interest" description="Disordered" evidence="2">
    <location>
        <begin position="189"/>
        <end position="211"/>
    </location>
</feature>
<feature type="compositionally biased region" description="Acidic residues" evidence="2">
    <location>
        <begin position="200"/>
        <end position="211"/>
    </location>
</feature>
<accession>Q18FU6</accession>
<sequence>MSRSALVGNITAMLEDAGFLVSDRCAIRPKSFDVAARRGEDLVLLKILGNVDALDRMTGAEMRRLGGYLDATPLVIGVRTRDEDLKPNVVYFRHGVPVLSPDTAMDLFVEGVPPLIYAAPGGLYVNIDGDLLADEREERGWSLGRLATELGVSRRTVSKYEDGMNASIEIAIQLEEVFDEPFSSPLEVMEGAESVRDSEPTPDDPDPDADDEHVVHILTRAGFTVHPTARAPFKAVGEDDDNRRGVMSLLTGHSSFTKSAKKRARIMSSLGEVTQTRAVYFTETDAKRDAVKGTALVSCAELDAVDDPAAIRDLIRERSQKPTEA</sequence>
<gene>
    <name type="ordered locus">HQ_3058A</name>
</gene>